<protein>
    <recommendedName>
        <fullName evidence="1">UDP-3-O-acyl-N-acetylglucosamine deacetylase</fullName>
        <shortName evidence="1">UDP-3-O-acyl-GlcNAc deacetylase</shortName>
        <ecNumber evidence="1">3.5.1.108</ecNumber>
    </recommendedName>
    <alternativeName>
        <fullName evidence="1">UDP-3-O-[R-3-hydroxymyristoyl]-N-acetylglucosamine deacetylase</fullName>
    </alternativeName>
</protein>
<gene>
    <name evidence="1" type="primary">lpxC</name>
    <name type="ordered locus">HAPS_0125</name>
</gene>
<accession>B8F3C2</accession>
<feature type="chain" id="PRO_1000134398" description="UDP-3-O-acyl-N-acetylglucosamine deacetylase">
    <location>
        <begin position="1"/>
        <end position="306"/>
    </location>
</feature>
<feature type="active site" description="Proton donor" evidence="1">
    <location>
        <position position="266"/>
    </location>
</feature>
<feature type="binding site" evidence="1">
    <location>
        <position position="79"/>
    </location>
    <ligand>
        <name>Zn(2+)</name>
        <dbReference type="ChEBI" id="CHEBI:29105"/>
    </ligand>
</feature>
<feature type="binding site" evidence="1">
    <location>
        <position position="239"/>
    </location>
    <ligand>
        <name>Zn(2+)</name>
        <dbReference type="ChEBI" id="CHEBI:29105"/>
    </ligand>
</feature>
<feature type="binding site" evidence="1">
    <location>
        <position position="243"/>
    </location>
    <ligand>
        <name>Zn(2+)</name>
        <dbReference type="ChEBI" id="CHEBI:29105"/>
    </ligand>
</feature>
<comment type="function">
    <text evidence="1">Catalyzes the hydrolysis of UDP-3-O-myristoyl-N-acetylglucosamine to form UDP-3-O-myristoylglucosamine and acetate, the committed step in lipid A biosynthesis.</text>
</comment>
<comment type="catalytic activity">
    <reaction evidence="1">
        <text>a UDP-3-O-[(3R)-3-hydroxyacyl]-N-acetyl-alpha-D-glucosamine + H2O = a UDP-3-O-[(3R)-3-hydroxyacyl]-alpha-D-glucosamine + acetate</text>
        <dbReference type="Rhea" id="RHEA:67816"/>
        <dbReference type="ChEBI" id="CHEBI:15377"/>
        <dbReference type="ChEBI" id="CHEBI:30089"/>
        <dbReference type="ChEBI" id="CHEBI:137740"/>
        <dbReference type="ChEBI" id="CHEBI:173225"/>
        <dbReference type="EC" id="3.5.1.108"/>
    </reaction>
</comment>
<comment type="cofactor">
    <cofactor evidence="1">
        <name>Zn(2+)</name>
        <dbReference type="ChEBI" id="CHEBI:29105"/>
    </cofactor>
</comment>
<comment type="pathway">
    <text evidence="1">Glycolipid biosynthesis; lipid IV(A) biosynthesis; lipid IV(A) from (3R)-3-hydroxytetradecanoyl-[acyl-carrier-protein] and UDP-N-acetyl-alpha-D-glucosamine: step 2/6.</text>
</comment>
<comment type="similarity">
    <text evidence="1">Belongs to the LpxC family.</text>
</comment>
<keyword id="KW-0378">Hydrolase</keyword>
<keyword id="KW-0441">Lipid A biosynthesis</keyword>
<keyword id="KW-0444">Lipid biosynthesis</keyword>
<keyword id="KW-0443">Lipid metabolism</keyword>
<keyword id="KW-0479">Metal-binding</keyword>
<keyword id="KW-1185">Reference proteome</keyword>
<keyword id="KW-0862">Zinc</keyword>
<evidence type="ECO:0000255" key="1">
    <source>
        <dbReference type="HAMAP-Rule" id="MF_00388"/>
    </source>
</evidence>
<dbReference type="EC" id="3.5.1.108" evidence="1"/>
<dbReference type="EMBL" id="CP001321">
    <property type="protein sequence ID" value="ACL31824.1"/>
    <property type="molecule type" value="Genomic_DNA"/>
</dbReference>
<dbReference type="RefSeq" id="WP_012621566.1">
    <property type="nucleotide sequence ID" value="NC_011852.1"/>
</dbReference>
<dbReference type="SMR" id="B8F3C2"/>
<dbReference type="STRING" id="557723.HAPS_0125"/>
<dbReference type="GeneID" id="66618518"/>
<dbReference type="KEGG" id="hap:HAPS_0125"/>
<dbReference type="PATRIC" id="fig|557723.8.peg.130"/>
<dbReference type="HOGENOM" id="CLU_046528_1_0_6"/>
<dbReference type="UniPathway" id="UPA00359">
    <property type="reaction ID" value="UER00478"/>
</dbReference>
<dbReference type="Proteomes" id="UP000006743">
    <property type="component" value="Chromosome"/>
</dbReference>
<dbReference type="GO" id="GO:0016020">
    <property type="term" value="C:membrane"/>
    <property type="evidence" value="ECO:0007669"/>
    <property type="project" value="GOC"/>
</dbReference>
<dbReference type="GO" id="GO:0046872">
    <property type="term" value="F:metal ion binding"/>
    <property type="evidence" value="ECO:0007669"/>
    <property type="project" value="UniProtKB-KW"/>
</dbReference>
<dbReference type="GO" id="GO:0103117">
    <property type="term" value="F:UDP-3-O-acyl-N-acetylglucosamine deacetylase activity"/>
    <property type="evidence" value="ECO:0007669"/>
    <property type="project" value="UniProtKB-UniRule"/>
</dbReference>
<dbReference type="GO" id="GO:0009245">
    <property type="term" value="P:lipid A biosynthetic process"/>
    <property type="evidence" value="ECO:0007669"/>
    <property type="project" value="UniProtKB-UniRule"/>
</dbReference>
<dbReference type="Gene3D" id="3.30.230.20">
    <property type="entry name" value="lpxc deacetylase, domain 1"/>
    <property type="match status" value="1"/>
</dbReference>
<dbReference type="Gene3D" id="3.30.1700.10">
    <property type="entry name" value="lpxc deacetylase, domain 2"/>
    <property type="match status" value="1"/>
</dbReference>
<dbReference type="HAMAP" id="MF_00388">
    <property type="entry name" value="LpxC"/>
    <property type="match status" value="1"/>
</dbReference>
<dbReference type="InterPro" id="IPR020568">
    <property type="entry name" value="Ribosomal_Su5_D2-typ_SF"/>
</dbReference>
<dbReference type="InterPro" id="IPR004463">
    <property type="entry name" value="UDP-acyl_GlcNac_deAcase"/>
</dbReference>
<dbReference type="InterPro" id="IPR011334">
    <property type="entry name" value="UDP-acyl_GlcNac_deAcase_C"/>
</dbReference>
<dbReference type="InterPro" id="IPR015870">
    <property type="entry name" value="UDP-acyl_N-AcGlcN_deAcase_N"/>
</dbReference>
<dbReference type="NCBIfam" id="TIGR00325">
    <property type="entry name" value="lpxC"/>
    <property type="match status" value="1"/>
</dbReference>
<dbReference type="PANTHER" id="PTHR33694">
    <property type="entry name" value="UDP-3-O-ACYL-N-ACETYLGLUCOSAMINE DEACETYLASE 1, MITOCHONDRIAL-RELATED"/>
    <property type="match status" value="1"/>
</dbReference>
<dbReference type="PANTHER" id="PTHR33694:SF1">
    <property type="entry name" value="UDP-3-O-ACYL-N-ACETYLGLUCOSAMINE DEACETYLASE 1, MITOCHONDRIAL-RELATED"/>
    <property type="match status" value="1"/>
</dbReference>
<dbReference type="Pfam" id="PF03331">
    <property type="entry name" value="LpxC"/>
    <property type="match status" value="1"/>
</dbReference>
<dbReference type="SUPFAM" id="SSF54211">
    <property type="entry name" value="Ribosomal protein S5 domain 2-like"/>
    <property type="match status" value="2"/>
</dbReference>
<name>LPXC_GLAP5</name>
<proteinExistence type="inferred from homology"/>
<organism>
    <name type="scientific">Glaesserella parasuis serovar 5 (strain SH0165)</name>
    <name type="common">Haemophilus parasuis</name>
    <dbReference type="NCBI Taxonomy" id="557723"/>
    <lineage>
        <taxon>Bacteria</taxon>
        <taxon>Pseudomonadati</taxon>
        <taxon>Pseudomonadota</taxon>
        <taxon>Gammaproteobacteria</taxon>
        <taxon>Pasteurellales</taxon>
        <taxon>Pasteurellaceae</taxon>
        <taxon>Glaesserella</taxon>
    </lineage>
</organism>
<reference key="1">
    <citation type="journal article" date="2009" name="J. Bacteriol.">
        <title>Complete genome sequence of Haemophilus parasuis SH0165.</title>
        <authorList>
            <person name="Yue M."/>
            <person name="Yang F."/>
            <person name="Yang J."/>
            <person name="Bei W."/>
            <person name="Cai X."/>
            <person name="Chen L."/>
            <person name="Dong J."/>
            <person name="Zhou R."/>
            <person name="Jin M."/>
            <person name="Jin Q."/>
            <person name="Chen H."/>
        </authorList>
    </citation>
    <scope>NUCLEOTIDE SEQUENCE [LARGE SCALE GENOMIC DNA]</scope>
    <source>
        <strain>SH0165</strain>
    </source>
</reference>
<sequence length="306" mass="34460">MIKQRTLKQAAKVTGIGLHSGKKVTLTLRPAPAHTGIIYARTDLDPVVYFPASAESIRDTQLCTCMINDEGVRISTVEHLNAAMSALGLDNLIVEVDAAEIPIMDGSSSPFIYLLLDAGIEEQDAPKKFIRIKESVRVEEGDKWAEFKPYSHGLKLDFTIDFTHPMITKEVRNYKMEFSAQHFIQQLSRARTFTFMKDVEYLQSIGLALGGSLDNAIVLDEYRILNEEGLRFKDELVRHKMLDAVGDLFMCGYNILGDFKAYKSGHSLNNKLLRAVLANENAWEFVTFDDKAEVPQGYQVTEQVFI</sequence>